<accession>Q16AD6</accession>
<organism>
    <name type="scientific">Roseobacter denitrificans (strain ATCC 33942 / OCh 114)</name>
    <name type="common">Erythrobacter sp. (strain OCh 114)</name>
    <name type="synonym">Roseobacter denitrificans</name>
    <dbReference type="NCBI Taxonomy" id="375451"/>
    <lineage>
        <taxon>Bacteria</taxon>
        <taxon>Pseudomonadati</taxon>
        <taxon>Pseudomonadota</taxon>
        <taxon>Alphaproteobacteria</taxon>
        <taxon>Rhodobacterales</taxon>
        <taxon>Roseobacteraceae</taxon>
        <taxon>Roseobacter</taxon>
    </lineage>
</organism>
<evidence type="ECO:0000255" key="1">
    <source>
        <dbReference type="HAMAP-Rule" id="MF_00374"/>
    </source>
</evidence>
<evidence type="ECO:0000305" key="2"/>
<name>RL29_ROSDO</name>
<proteinExistence type="inferred from homology"/>
<gene>
    <name evidence="1" type="primary">rpmC</name>
    <name type="ordered locus">RD1_1418</name>
</gene>
<reference key="1">
    <citation type="journal article" date="2007" name="J. Bacteriol.">
        <title>The complete genome sequence of Roseobacter denitrificans reveals a mixotrophic rather than photosynthetic metabolism.</title>
        <authorList>
            <person name="Swingley W.D."/>
            <person name="Sadekar S."/>
            <person name="Mastrian S.D."/>
            <person name="Matthies H.J."/>
            <person name="Hao J."/>
            <person name="Ramos H."/>
            <person name="Acharya C.R."/>
            <person name="Conrad A.L."/>
            <person name="Taylor H.L."/>
            <person name="Dejesa L.C."/>
            <person name="Shah M.K."/>
            <person name="O'Huallachain M.E."/>
            <person name="Lince M.T."/>
            <person name="Blankenship R.E."/>
            <person name="Beatty J.T."/>
            <person name="Touchman J.W."/>
        </authorList>
    </citation>
    <scope>NUCLEOTIDE SEQUENCE [LARGE SCALE GENOMIC DNA]</scope>
    <source>
        <strain>ATCC 33942 / OCh 114</strain>
    </source>
</reference>
<protein>
    <recommendedName>
        <fullName evidence="1">Large ribosomal subunit protein uL29</fullName>
    </recommendedName>
    <alternativeName>
        <fullName evidence="2">50S ribosomal protein L29</fullName>
    </alternativeName>
</protein>
<keyword id="KW-1185">Reference proteome</keyword>
<keyword id="KW-0687">Ribonucleoprotein</keyword>
<keyword id="KW-0689">Ribosomal protein</keyword>
<sequence>MNAKELHDKTPDQLREELANLKKTSFNLRFQQATGQLENPAQIRKARRDAARVKTILNQKAASAAASE</sequence>
<comment type="similarity">
    <text evidence="1">Belongs to the universal ribosomal protein uL29 family.</text>
</comment>
<feature type="chain" id="PRO_1000007591" description="Large ribosomal subunit protein uL29">
    <location>
        <begin position="1"/>
        <end position="68"/>
    </location>
</feature>
<dbReference type="EMBL" id="CP000362">
    <property type="protein sequence ID" value="ABG31057.1"/>
    <property type="molecule type" value="Genomic_DNA"/>
</dbReference>
<dbReference type="RefSeq" id="WP_011567677.1">
    <property type="nucleotide sequence ID" value="NC_008209.1"/>
</dbReference>
<dbReference type="SMR" id="Q16AD6"/>
<dbReference type="STRING" id="375451.RD1_1418"/>
<dbReference type="KEGG" id="rde:RD1_1418"/>
<dbReference type="eggNOG" id="COG0255">
    <property type="taxonomic scope" value="Bacteria"/>
</dbReference>
<dbReference type="HOGENOM" id="CLU_158491_1_0_5"/>
<dbReference type="OrthoDB" id="9815192at2"/>
<dbReference type="Proteomes" id="UP000007029">
    <property type="component" value="Chromosome"/>
</dbReference>
<dbReference type="GO" id="GO:0022625">
    <property type="term" value="C:cytosolic large ribosomal subunit"/>
    <property type="evidence" value="ECO:0007669"/>
    <property type="project" value="TreeGrafter"/>
</dbReference>
<dbReference type="GO" id="GO:0003735">
    <property type="term" value="F:structural constituent of ribosome"/>
    <property type="evidence" value="ECO:0007669"/>
    <property type="project" value="InterPro"/>
</dbReference>
<dbReference type="GO" id="GO:0006412">
    <property type="term" value="P:translation"/>
    <property type="evidence" value="ECO:0007669"/>
    <property type="project" value="UniProtKB-UniRule"/>
</dbReference>
<dbReference type="CDD" id="cd00427">
    <property type="entry name" value="Ribosomal_L29_HIP"/>
    <property type="match status" value="1"/>
</dbReference>
<dbReference type="FunFam" id="1.10.287.310:FF:000001">
    <property type="entry name" value="50S ribosomal protein L29"/>
    <property type="match status" value="1"/>
</dbReference>
<dbReference type="Gene3D" id="1.10.287.310">
    <property type="match status" value="1"/>
</dbReference>
<dbReference type="HAMAP" id="MF_00374">
    <property type="entry name" value="Ribosomal_uL29"/>
    <property type="match status" value="1"/>
</dbReference>
<dbReference type="InterPro" id="IPR050063">
    <property type="entry name" value="Ribosomal_protein_uL29"/>
</dbReference>
<dbReference type="InterPro" id="IPR001854">
    <property type="entry name" value="Ribosomal_uL29"/>
</dbReference>
<dbReference type="InterPro" id="IPR036049">
    <property type="entry name" value="Ribosomal_uL29_sf"/>
</dbReference>
<dbReference type="NCBIfam" id="TIGR00012">
    <property type="entry name" value="L29"/>
    <property type="match status" value="1"/>
</dbReference>
<dbReference type="PANTHER" id="PTHR10916">
    <property type="entry name" value="60S RIBOSOMAL PROTEIN L35/50S RIBOSOMAL PROTEIN L29"/>
    <property type="match status" value="1"/>
</dbReference>
<dbReference type="PANTHER" id="PTHR10916:SF0">
    <property type="entry name" value="LARGE RIBOSOMAL SUBUNIT PROTEIN UL29C"/>
    <property type="match status" value="1"/>
</dbReference>
<dbReference type="Pfam" id="PF00831">
    <property type="entry name" value="Ribosomal_L29"/>
    <property type="match status" value="1"/>
</dbReference>
<dbReference type="SUPFAM" id="SSF46561">
    <property type="entry name" value="Ribosomal protein L29 (L29p)"/>
    <property type="match status" value="1"/>
</dbReference>